<keyword id="KW-0148">Chlorophyll</keyword>
<keyword id="KW-0150">Chloroplast</keyword>
<keyword id="KW-0157">Chromophore</keyword>
<keyword id="KW-0472">Membrane</keyword>
<keyword id="KW-0602">Photosynthesis</keyword>
<keyword id="KW-0604">Photosystem II</keyword>
<keyword id="KW-0934">Plastid</keyword>
<keyword id="KW-1185">Reference proteome</keyword>
<keyword id="KW-0793">Thylakoid</keyword>
<keyword id="KW-0812">Transmembrane</keyword>
<keyword id="KW-1133">Transmembrane helix</keyword>
<comment type="function">
    <text evidence="1">One of the components of the core complex of photosystem II (PSII). It binds chlorophyll and helps catalyze the primary light-induced photochemical processes of PSII. PSII is a light-driven water:plastoquinone oxidoreductase, using light energy to abstract electrons from H(2)O, generating O(2) and a proton gradient subsequently used for ATP formation.</text>
</comment>
<comment type="cofactor">
    <text evidence="1">Binds multiple chlorophylls. PSII binds additional chlorophylls, carotenoids and specific lipids.</text>
</comment>
<comment type="subunit">
    <text evidence="1">PSII is composed of 1 copy each of membrane proteins PsbA, PsbB, PsbC, PsbD, PsbE, PsbF, PsbH, PsbI, PsbJ, PsbK, PsbL, PsbM, PsbT, PsbX, PsbY, PsbZ, Psb30/Ycf12, at least 3 peripheral proteins of the oxygen-evolving complex and a large number of cofactors. It forms dimeric complexes.</text>
</comment>
<comment type="subcellular location">
    <subcellularLocation>
        <location evidence="1">Plastid</location>
        <location evidence="1">Chloroplast thylakoid membrane</location>
        <topology evidence="1">Multi-pass membrane protein</topology>
    </subcellularLocation>
</comment>
<comment type="similarity">
    <text evidence="1">Belongs to the PsbB/PsbC family. PsbB subfamily.</text>
</comment>
<sequence>MGLPWYRVHTVVLNDPGRLLAVHIMHTALVAGWAGSMALYELAVFDPSDPVLDPMWRQGMFVIPFMTRLGITNSWGGWSITGGTITNPGIWSYEGVAGAHIVFSGLCFLAAIWHWVYWDLEIFCDERTGKPSLDLPKIFGIHLFLSGVACFGFGAFHVTGLYGPGIWVSDPYGLTGKVQSVNPAWGVEGFDPFVPGGIASHHIAAGTLGILAGLFHLSVRPPQRLYKGLRMGNIETVLSSSIAAVFFAAFVVAGTMWYGSATTPIELFGPTRYQWDQGYFQQEIYRRVGTGLAENQSLSEAWSKIPEKLAFYDYIGNNPAKGGLFRAGSMDNGDGIAIGWLGHPLFRDKEGRELFVRRMPTFFETFPVVLVDGDGIVRADVPFRRAESKYSVEQVGVTVEFYGGELNGVSYSDPATVKKYARRAQLGEIFELDRATLKSDGVFRSSPRGWFTFGHASFALLFFFGHIWHGSRTLFRDVFAGIDPDLDAQVEFGAFQKLGDPTTRRQVV</sequence>
<organism>
    <name type="scientific">Populus trichocarpa</name>
    <name type="common">Western balsam poplar</name>
    <name type="synonym">Populus balsamifera subsp. trichocarpa</name>
    <dbReference type="NCBI Taxonomy" id="3694"/>
    <lineage>
        <taxon>Eukaryota</taxon>
        <taxon>Viridiplantae</taxon>
        <taxon>Streptophyta</taxon>
        <taxon>Embryophyta</taxon>
        <taxon>Tracheophyta</taxon>
        <taxon>Spermatophyta</taxon>
        <taxon>Magnoliopsida</taxon>
        <taxon>eudicotyledons</taxon>
        <taxon>Gunneridae</taxon>
        <taxon>Pentapetalae</taxon>
        <taxon>rosids</taxon>
        <taxon>fabids</taxon>
        <taxon>Malpighiales</taxon>
        <taxon>Salicaceae</taxon>
        <taxon>Saliceae</taxon>
        <taxon>Populus</taxon>
    </lineage>
</organism>
<name>PSBB_POPTR</name>
<reference key="1">
    <citation type="journal article" date="2006" name="Science">
        <title>The genome of black cottonwood, Populus trichocarpa (Torr. &amp; Gray).</title>
        <authorList>
            <person name="Tuskan G.A."/>
            <person name="Difazio S."/>
            <person name="Jansson S."/>
            <person name="Bohlmann J."/>
            <person name="Grigoriev I."/>
            <person name="Hellsten U."/>
            <person name="Putnam N."/>
            <person name="Ralph S."/>
            <person name="Rombauts S."/>
            <person name="Salamov A."/>
            <person name="Schein J."/>
            <person name="Sterck L."/>
            <person name="Aerts A."/>
            <person name="Bhalerao R.R."/>
            <person name="Bhalerao R.P."/>
            <person name="Blaudez D."/>
            <person name="Boerjan W."/>
            <person name="Brun A."/>
            <person name="Brunner A."/>
            <person name="Busov V."/>
            <person name="Campbell M."/>
            <person name="Carlson J."/>
            <person name="Chalot M."/>
            <person name="Chapman J."/>
            <person name="Chen G.-L."/>
            <person name="Cooper D."/>
            <person name="Coutinho P.M."/>
            <person name="Couturier J."/>
            <person name="Covert S."/>
            <person name="Cronk Q."/>
            <person name="Cunningham R."/>
            <person name="Davis J."/>
            <person name="Degroeve S."/>
            <person name="Dejardin A."/>
            <person name="dePamphilis C.W."/>
            <person name="Detter J."/>
            <person name="Dirks B."/>
            <person name="Dubchak I."/>
            <person name="Duplessis S."/>
            <person name="Ehlting J."/>
            <person name="Ellis B."/>
            <person name="Gendler K."/>
            <person name="Goodstein D."/>
            <person name="Gribskov M."/>
            <person name="Grimwood J."/>
            <person name="Groover A."/>
            <person name="Gunter L."/>
            <person name="Hamberger B."/>
            <person name="Heinze B."/>
            <person name="Helariutta Y."/>
            <person name="Henrissat B."/>
            <person name="Holligan D."/>
            <person name="Holt R."/>
            <person name="Huang W."/>
            <person name="Islam-Faridi N."/>
            <person name="Jones S."/>
            <person name="Jones-Rhoades M."/>
            <person name="Jorgensen R."/>
            <person name="Joshi C."/>
            <person name="Kangasjaervi J."/>
            <person name="Karlsson J."/>
            <person name="Kelleher C."/>
            <person name="Kirkpatrick R."/>
            <person name="Kirst M."/>
            <person name="Kohler A."/>
            <person name="Kalluri U."/>
            <person name="Larimer F."/>
            <person name="Leebens-Mack J."/>
            <person name="Leple J.-C."/>
            <person name="Locascio P."/>
            <person name="Lou Y."/>
            <person name="Lucas S."/>
            <person name="Martin F."/>
            <person name="Montanini B."/>
            <person name="Napoli C."/>
            <person name="Nelson D.R."/>
            <person name="Nelson C."/>
            <person name="Nieminen K."/>
            <person name="Nilsson O."/>
            <person name="Pereda V."/>
            <person name="Peter G."/>
            <person name="Philippe R."/>
            <person name="Pilate G."/>
            <person name="Poliakov A."/>
            <person name="Razumovskaya J."/>
            <person name="Richardson P."/>
            <person name="Rinaldi C."/>
            <person name="Ritland K."/>
            <person name="Rouze P."/>
            <person name="Ryaboy D."/>
            <person name="Schmutz J."/>
            <person name="Schrader J."/>
            <person name="Segerman B."/>
            <person name="Shin H."/>
            <person name="Siddiqui A."/>
            <person name="Sterky F."/>
            <person name="Terry A."/>
            <person name="Tsai C.-J."/>
            <person name="Uberbacher E."/>
            <person name="Unneberg P."/>
            <person name="Vahala J."/>
            <person name="Wall K."/>
            <person name="Wessler S."/>
            <person name="Yang G."/>
            <person name="Yin T."/>
            <person name="Douglas C."/>
            <person name="Marra M."/>
            <person name="Sandberg G."/>
            <person name="Van de Peer Y."/>
            <person name="Rokhsar D.S."/>
        </authorList>
    </citation>
    <scope>NUCLEOTIDE SEQUENCE [LARGE SCALE GENOMIC DNA]</scope>
    <source>
        <strain>cv. Nisqually</strain>
    </source>
</reference>
<proteinExistence type="inferred from homology"/>
<protein>
    <recommendedName>
        <fullName evidence="1">Photosystem II CP47 reaction center protein</fullName>
    </recommendedName>
    <alternativeName>
        <fullName evidence="1">PSII 47 kDa protein</fullName>
    </alternativeName>
    <alternativeName>
        <fullName evidence="1">Protein CP-47</fullName>
    </alternativeName>
</protein>
<evidence type="ECO:0000255" key="1">
    <source>
        <dbReference type="HAMAP-Rule" id="MF_01495"/>
    </source>
</evidence>
<feature type="chain" id="PRO_0000359859" description="Photosystem II CP47 reaction center protein">
    <location>
        <begin position="1"/>
        <end position="508"/>
    </location>
</feature>
<feature type="transmembrane region" description="Helical" evidence="1">
    <location>
        <begin position="21"/>
        <end position="36"/>
    </location>
</feature>
<feature type="transmembrane region" description="Helical" evidence="1">
    <location>
        <begin position="101"/>
        <end position="115"/>
    </location>
</feature>
<feature type="transmembrane region" description="Helical" evidence="1">
    <location>
        <begin position="140"/>
        <end position="156"/>
    </location>
</feature>
<feature type="transmembrane region" description="Helical" evidence="1">
    <location>
        <begin position="203"/>
        <end position="218"/>
    </location>
</feature>
<feature type="transmembrane region" description="Helical" evidence="1">
    <location>
        <begin position="237"/>
        <end position="252"/>
    </location>
</feature>
<feature type="transmembrane region" description="Helical" evidence="1">
    <location>
        <begin position="457"/>
        <end position="472"/>
    </location>
</feature>
<accession>A4GYT7</accession>
<gene>
    <name evidence="1" type="primary">psbB</name>
    <name type="ordered locus">Poptr_cp049</name>
</gene>
<dbReference type="EMBL" id="EF489041">
    <property type="protein sequence ID" value="ABO36732.1"/>
    <property type="molecule type" value="Genomic_DNA"/>
</dbReference>
<dbReference type="RefSeq" id="YP_001109528.1">
    <property type="nucleotide sequence ID" value="NC_009143.1"/>
</dbReference>
<dbReference type="SMR" id="A4GYT7"/>
<dbReference type="FunCoup" id="A4GYT7">
    <property type="interactions" value="471"/>
</dbReference>
<dbReference type="STRING" id="3694.A4GYT7"/>
<dbReference type="GeneID" id="4929699"/>
<dbReference type="KEGG" id="pop:4929699"/>
<dbReference type="eggNOG" id="ENOG502QRV6">
    <property type="taxonomic scope" value="Eukaryota"/>
</dbReference>
<dbReference type="InParanoid" id="A4GYT7"/>
<dbReference type="OrthoDB" id="1843417at2759"/>
<dbReference type="Proteomes" id="UP000006729">
    <property type="component" value="Chloroplast"/>
</dbReference>
<dbReference type="ExpressionAtlas" id="A4GYT7">
    <property type="expression patterns" value="differential"/>
</dbReference>
<dbReference type="GO" id="GO:0009535">
    <property type="term" value="C:chloroplast thylakoid membrane"/>
    <property type="evidence" value="ECO:0007669"/>
    <property type="project" value="UniProtKB-SubCell"/>
</dbReference>
<dbReference type="GO" id="GO:0009523">
    <property type="term" value="C:photosystem II"/>
    <property type="evidence" value="ECO:0007669"/>
    <property type="project" value="UniProtKB-KW"/>
</dbReference>
<dbReference type="GO" id="GO:0016168">
    <property type="term" value="F:chlorophyll binding"/>
    <property type="evidence" value="ECO:0007669"/>
    <property type="project" value="UniProtKB-UniRule"/>
</dbReference>
<dbReference type="GO" id="GO:0045156">
    <property type="term" value="F:electron transporter, transferring electrons within the cyclic electron transport pathway of photosynthesis activity"/>
    <property type="evidence" value="ECO:0007669"/>
    <property type="project" value="InterPro"/>
</dbReference>
<dbReference type="GO" id="GO:0009772">
    <property type="term" value="P:photosynthetic electron transport in photosystem II"/>
    <property type="evidence" value="ECO:0007669"/>
    <property type="project" value="InterPro"/>
</dbReference>
<dbReference type="FunFam" id="3.10.680.10:FF:000001">
    <property type="entry name" value="Photosystem II CP47 reaction center protein"/>
    <property type="match status" value="1"/>
</dbReference>
<dbReference type="Gene3D" id="3.10.680.10">
    <property type="entry name" value="Photosystem II CP47 reaction center protein"/>
    <property type="match status" value="1"/>
</dbReference>
<dbReference type="HAMAP" id="MF_01495">
    <property type="entry name" value="PSII_PsbB_CP47"/>
    <property type="match status" value="1"/>
</dbReference>
<dbReference type="InterPro" id="IPR000932">
    <property type="entry name" value="PS_antenna-like"/>
</dbReference>
<dbReference type="InterPro" id="IPR036001">
    <property type="entry name" value="PS_II_antenna-like_sf"/>
</dbReference>
<dbReference type="InterPro" id="IPR017486">
    <property type="entry name" value="PSII_PsbB"/>
</dbReference>
<dbReference type="NCBIfam" id="TIGR03039">
    <property type="entry name" value="PS_II_CP47"/>
    <property type="match status" value="1"/>
</dbReference>
<dbReference type="PANTHER" id="PTHR33180">
    <property type="entry name" value="PHOTOSYSTEM II CP43 REACTION CENTER PROTEIN"/>
    <property type="match status" value="1"/>
</dbReference>
<dbReference type="PANTHER" id="PTHR33180:SF38">
    <property type="entry name" value="PHOTOSYSTEM II CP47 REACTION CENTER PROTEIN"/>
    <property type="match status" value="1"/>
</dbReference>
<dbReference type="Pfam" id="PF00421">
    <property type="entry name" value="PSII"/>
    <property type="match status" value="1"/>
</dbReference>
<dbReference type="SUPFAM" id="SSF161077">
    <property type="entry name" value="Photosystem II antenna protein-like"/>
    <property type="match status" value="1"/>
</dbReference>
<geneLocation type="chloroplast"/>